<evidence type="ECO:0000255" key="1">
    <source>
        <dbReference type="HAMAP-Rule" id="MF_01953"/>
    </source>
</evidence>
<protein>
    <recommendedName>
        <fullName evidence="1">Urease subunit alpha</fullName>
        <ecNumber evidence="1">3.5.1.5</ecNumber>
    </recommendedName>
    <alternativeName>
        <fullName evidence="1">Urea amidohydrolase subunit alpha</fullName>
    </alternativeName>
</protein>
<dbReference type="EC" id="3.5.1.5" evidence="1"/>
<dbReference type="EMBL" id="CP001016">
    <property type="protein sequence ID" value="ACB94684.1"/>
    <property type="molecule type" value="Genomic_DNA"/>
</dbReference>
<dbReference type="RefSeq" id="WP_012384041.1">
    <property type="nucleotide sequence ID" value="NC_010581.1"/>
</dbReference>
<dbReference type="SMR" id="B2IIJ1"/>
<dbReference type="STRING" id="395963.Bind_1041"/>
<dbReference type="MEROPS" id="M38.982"/>
<dbReference type="KEGG" id="bid:Bind_1041"/>
<dbReference type="eggNOG" id="COG0804">
    <property type="taxonomic scope" value="Bacteria"/>
</dbReference>
<dbReference type="HOGENOM" id="CLU_000980_0_0_5"/>
<dbReference type="OrthoDB" id="9802793at2"/>
<dbReference type="UniPathway" id="UPA00258">
    <property type="reaction ID" value="UER00370"/>
</dbReference>
<dbReference type="Proteomes" id="UP000001695">
    <property type="component" value="Chromosome"/>
</dbReference>
<dbReference type="GO" id="GO:0005737">
    <property type="term" value="C:cytoplasm"/>
    <property type="evidence" value="ECO:0007669"/>
    <property type="project" value="UniProtKB-SubCell"/>
</dbReference>
<dbReference type="GO" id="GO:0016151">
    <property type="term" value="F:nickel cation binding"/>
    <property type="evidence" value="ECO:0007669"/>
    <property type="project" value="UniProtKB-UniRule"/>
</dbReference>
<dbReference type="GO" id="GO:0009039">
    <property type="term" value="F:urease activity"/>
    <property type="evidence" value="ECO:0007669"/>
    <property type="project" value="UniProtKB-UniRule"/>
</dbReference>
<dbReference type="GO" id="GO:0043419">
    <property type="term" value="P:urea catabolic process"/>
    <property type="evidence" value="ECO:0007669"/>
    <property type="project" value="UniProtKB-UniRule"/>
</dbReference>
<dbReference type="CDD" id="cd00375">
    <property type="entry name" value="Urease_alpha"/>
    <property type="match status" value="1"/>
</dbReference>
<dbReference type="Gene3D" id="3.20.20.140">
    <property type="entry name" value="Metal-dependent hydrolases"/>
    <property type="match status" value="1"/>
</dbReference>
<dbReference type="Gene3D" id="2.30.40.10">
    <property type="entry name" value="Urease, subunit C, domain 1"/>
    <property type="match status" value="1"/>
</dbReference>
<dbReference type="HAMAP" id="MF_01953">
    <property type="entry name" value="Urease_alpha"/>
    <property type="match status" value="1"/>
</dbReference>
<dbReference type="InterPro" id="IPR006680">
    <property type="entry name" value="Amidohydro-rel"/>
</dbReference>
<dbReference type="InterPro" id="IPR011059">
    <property type="entry name" value="Metal-dep_hydrolase_composite"/>
</dbReference>
<dbReference type="InterPro" id="IPR032466">
    <property type="entry name" value="Metal_Hydrolase"/>
</dbReference>
<dbReference type="InterPro" id="IPR011612">
    <property type="entry name" value="Urease_alpha_N_dom"/>
</dbReference>
<dbReference type="InterPro" id="IPR050112">
    <property type="entry name" value="Urease_alpha_subunit"/>
</dbReference>
<dbReference type="InterPro" id="IPR017950">
    <property type="entry name" value="Urease_AS"/>
</dbReference>
<dbReference type="InterPro" id="IPR005848">
    <property type="entry name" value="Urease_asu"/>
</dbReference>
<dbReference type="InterPro" id="IPR017951">
    <property type="entry name" value="Urease_asu_c"/>
</dbReference>
<dbReference type="InterPro" id="IPR029754">
    <property type="entry name" value="Urease_Ni-bd"/>
</dbReference>
<dbReference type="NCBIfam" id="NF009685">
    <property type="entry name" value="PRK13206.1"/>
    <property type="match status" value="1"/>
</dbReference>
<dbReference type="NCBIfam" id="NF009686">
    <property type="entry name" value="PRK13207.1"/>
    <property type="match status" value="1"/>
</dbReference>
<dbReference type="NCBIfam" id="TIGR01792">
    <property type="entry name" value="urease_alph"/>
    <property type="match status" value="1"/>
</dbReference>
<dbReference type="PANTHER" id="PTHR43440">
    <property type="entry name" value="UREASE"/>
    <property type="match status" value="1"/>
</dbReference>
<dbReference type="PANTHER" id="PTHR43440:SF1">
    <property type="entry name" value="UREASE"/>
    <property type="match status" value="1"/>
</dbReference>
<dbReference type="Pfam" id="PF01979">
    <property type="entry name" value="Amidohydro_1"/>
    <property type="match status" value="1"/>
</dbReference>
<dbReference type="Pfam" id="PF00449">
    <property type="entry name" value="Urease_alpha"/>
    <property type="match status" value="1"/>
</dbReference>
<dbReference type="PRINTS" id="PR01752">
    <property type="entry name" value="UREASE"/>
</dbReference>
<dbReference type="SUPFAM" id="SSF51338">
    <property type="entry name" value="Composite domain of metallo-dependent hydrolases"/>
    <property type="match status" value="2"/>
</dbReference>
<dbReference type="SUPFAM" id="SSF51556">
    <property type="entry name" value="Metallo-dependent hydrolases"/>
    <property type="match status" value="1"/>
</dbReference>
<dbReference type="PROSITE" id="PS01120">
    <property type="entry name" value="UREASE_1"/>
    <property type="match status" value="1"/>
</dbReference>
<dbReference type="PROSITE" id="PS00145">
    <property type="entry name" value="UREASE_2"/>
    <property type="match status" value="1"/>
</dbReference>
<dbReference type="PROSITE" id="PS51368">
    <property type="entry name" value="UREASE_3"/>
    <property type="match status" value="1"/>
</dbReference>
<comment type="catalytic activity">
    <reaction evidence="1">
        <text>urea + 2 H2O + H(+) = hydrogencarbonate + 2 NH4(+)</text>
        <dbReference type="Rhea" id="RHEA:20557"/>
        <dbReference type="ChEBI" id="CHEBI:15377"/>
        <dbReference type="ChEBI" id="CHEBI:15378"/>
        <dbReference type="ChEBI" id="CHEBI:16199"/>
        <dbReference type="ChEBI" id="CHEBI:17544"/>
        <dbReference type="ChEBI" id="CHEBI:28938"/>
        <dbReference type="EC" id="3.5.1.5"/>
    </reaction>
</comment>
<comment type="cofactor">
    <cofactor evidence="1">
        <name>Ni cation</name>
        <dbReference type="ChEBI" id="CHEBI:25516"/>
    </cofactor>
    <text evidence="1">Binds 2 nickel ions per subunit.</text>
</comment>
<comment type="pathway">
    <text evidence="1">Nitrogen metabolism; urea degradation; CO(2) and NH(3) from urea (urease route): step 1/1.</text>
</comment>
<comment type="subunit">
    <text evidence="1">Heterotrimer of UreA (gamma), UreB (beta) and UreC (alpha) subunits. Three heterotrimers associate to form the active enzyme.</text>
</comment>
<comment type="subcellular location">
    <subcellularLocation>
        <location evidence="1">Cytoplasm</location>
    </subcellularLocation>
</comment>
<comment type="PTM">
    <text evidence="1">Carboxylation allows a single lysine to coordinate two nickel ions.</text>
</comment>
<comment type="similarity">
    <text evidence="1">Belongs to the metallo-dependent hydrolases superfamily. Urease alpha subunit family.</text>
</comment>
<proteinExistence type="inferred from homology"/>
<reference key="1">
    <citation type="journal article" date="2010" name="J. Bacteriol.">
        <title>Complete genome sequence of Beijerinckia indica subsp. indica.</title>
        <authorList>
            <person name="Tamas I."/>
            <person name="Dedysh S.N."/>
            <person name="Liesack W."/>
            <person name="Stott M.B."/>
            <person name="Alam M."/>
            <person name="Murrell J.C."/>
            <person name="Dunfield P.F."/>
        </authorList>
    </citation>
    <scope>NUCLEOTIDE SEQUENCE [LARGE SCALE GENOMIC DNA]</scope>
    <source>
        <strain>ATCC 9039 / DSM 1715 / NCIMB 8712</strain>
    </source>
</reference>
<name>URE1_BEII9</name>
<accession>B2IIJ1</accession>
<keyword id="KW-0963">Cytoplasm</keyword>
<keyword id="KW-0378">Hydrolase</keyword>
<keyword id="KW-0479">Metal-binding</keyword>
<keyword id="KW-0533">Nickel</keyword>
<keyword id="KW-1185">Reference proteome</keyword>
<gene>
    <name evidence="1" type="primary">ureC</name>
    <name type="ordered locus">Bind_1041</name>
</gene>
<sequence length="570" mass="60983">MAVTLPRPAYAGMFGPTTGDKVRLADTELFIEIERDFTLYGEEVKFGGGKVIRDGMGQGQASKAEGAADTIITNAVIIDHWGIVKADVGLRDGRIIGIGKAGNPDVQPGIDLIIGPGTEIIAGEGRILTAGGFDSHIHFICPQQIEEALASGMTTMLGGGTGPATGTFATTCTPGPWHIARMIEASDGFAMNLGFAGKGNASRSEGLVEQIEAGACALKLHEDWGTTPAAIDCCLSVADDHDIQVMIHTDTLNESGFVEDTIRAFKGRTIHAFHTEGAGGGHAPDIMKVAGLPNVLPSSTNPTRPFTVNTLDEHLDMLMVCHHLDPSIAEDLAFAESRIRKETIAAEDILHDLGALSMMSSDSQAMGRIGEVITRTWQTADKMKRQRGPLPEDKSNNDNFRVRRYIAKYTINPAITHGVSRHIGSIEPGKLADLVLWTPAFFGVKPDLVIKGGMIAYAMMGDPNASIPTPQPVHGRPMFGSFGGARTGTSLTFTSKTALAHGLAQKLKISRKLVPVENTRGNLRKTSLILNGAMPHIEIDPETYVVKADGMVLTCEPARSLPMAQRYFLF</sequence>
<organism>
    <name type="scientific">Beijerinckia indica subsp. indica (strain ATCC 9039 / DSM 1715 / NCIMB 8712)</name>
    <dbReference type="NCBI Taxonomy" id="395963"/>
    <lineage>
        <taxon>Bacteria</taxon>
        <taxon>Pseudomonadati</taxon>
        <taxon>Pseudomonadota</taxon>
        <taxon>Alphaproteobacteria</taxon>
        <taxon>Hyphomicrobiales</taxon>
        <taxon>Beijerinckiaceae</taxon>
        <taxon>Beijerinckia</taxon>
    </lineage>
</organism>
<feature type="chain" id="PRO_1000188863" description="Urease subunit alpha">
    <location>
        <begin position="1"/>
        <end position="570"/>
    </location>
</feature>
<feature type="domain" description="Urease" evidence="1">
    <location>
        <begin position="131"/>
        <end position="570"/>
    </location>
</feature>
<feature type="active site" description="Proton donor" evidence="1">
    <location>
        <position position="322"/>
    </location>
</feature>
<feature type="binding site" evidence="1">
    <location>
        <position position="136"/>
    </location>
    <ligand>
        <name>Ni(2+)</name>
        <dbReference type="ChEBI" id="CHEBI:49786"/>
        <label>1</label>
    </ligand>
</feature>
<feature type="binding site" evidence="1">
    <location>
        <position position="138"/>
    </location>
    <ligand>
        <name>Ni(2+)</name>
        <dbReference type="ChEBI" id="CHEBI:49786"/>
        <label>1</label>
    </ligand>
</feature>
<feature type="binding site" description="via carbamate group" evidence="1">
    <location>
        <position position="219"/>
    </location>
    <ligand>
        <name>Ni(2+)</name>
        <dbReference type="ChEBI" id="CHEBI:49786"/>
        <label>1</label>
    </ligand>
</feature>
<feature type="binding site" description="via carbamate group" evidence="1">
    <location>
        <position position="219"/>
    </location>
    <ligand>
        <name>Ni(2+)</name>
        <dbReference type="ChEBI" id="CHEBI:49786"/>
        <label>2</label>
    </ligand>
</feature>
<feature type="binding site" evidence="1">
    <location>
        <position position="221"/>
    </location>
    <ligand>
        <name>substrate</name>
    </ligand>
</feature>
<feature type="binding site" evidence="1">
    <location>
        <position position="248"/>
    </location>
    <ligand>
        <name>Ni(2+)</name>
        <dbReference type="ChEBI" id="CHEBI:49786"/>
        <label>2</label>
    </ligand>
</feature>
<feature type="binding site" evidence="1">
    <location>
        <position position="274"/>
    </location>
    <ligand>
        <name>Ni(2+)</name>
        <dbReference type="ChEBI" id="CHEBI:49786"/>
        <label>2</label>
    </ligand>
</feature>
<feature type="binding site" evidence="1">
    <location>
        <position position="362"/>
    </location>
    <ligand>
        <name>Ni(2+)</name>
        <dbReference type="ChEBI" id="CHEBI:49786"/>
        <label>1</label>
    </ligand>
</feature>
<feature type="modified residue" description="N6-carboxylysine" evidence="1">
    <location>
        <position position="219"/>
    </location>
</feature>